<organism>
    <name type="scientific">Stachybotrys chartarum (strain CBS 109288 / IBT 7711)</name>
    <name type="common">Toxic black mold</name>
    <name type="synonym">Stilbospora chartarum</name>
    <dbReference type="NCBI Taxonomy" id="1280523"/>
    <lineage>
        <taxon>Eukaryota</taxon>
        <taxon>Fungi</taxon>
        <taxon>Dikarya</taxon>
        <taxon>Ascomycota</taxon>
        <taxon>Pezizomycotina</taxon>
        <taxon>Sordariomycetes</taxon>
        <taxon>Hypocreomycetidae</taxon>
        <taxon>Hypocreales</taxon>
        <taxon>Stachybotryaceae</taxon>
        <taxon>Stachybotrys</taxon>
    </lineage>
</organism>
<sequence length="470" mass="50994">MSTSTSEPGAIAGLPLGAEVRTDGDATGLSVAIVGGGIVGIALALGLVERGVRVSVYERAQELPEIGVGFAFNGAARKSMARLSPLVMAAVERVANENEQAYDNYWDGYTSTAEDDESSTASKRGKLLFRMPNSNMAWWSCLRSQFLNEMLQALPPGTVTFGKELDSYDDPFDTSDPVRLRFTDGTTAAANVLIGSDGLRSRVRQQLFATSHPEVCNPTYTHKTCYRAVIPMAAAESAMGLSKPHNHCMHTGPRAHVLSYPIAQHKLVNVVLFVTHDEPWVDGTGDEAISVPRMTRPGDKKVLQNRLADWRPEVRNLVAQLPDAPTAWGIFDTAEHPVPFYAAGRVGLVGDAAHASSPHHGAGAGFGVEDALALAVALGMATEKKQSVAAALQAFNDVRYDRTQWLIRSSKETGDIYEWKHFGVGGDPVKIRAELEGRQKTIWDYDVDAMAEEVKTRYEARVTSETTAHQ</sequence>
<keyword id="KW-0274">FAD</keyword>
<keyword id="KW-0285">Flavoprotein</keyword>
<keyword id="KW-0472">Membrane</keyword>
<keyword id="KW-0503">Monooxygenase</keyword>
<keyword id="KW-0560">Oxidoreductase</keyword>
<keyword id="KW-0812">Transmembrane</keyword>
<keyword id="KW-1133">Transmembrane helix</keyword>
<proteinExistence type="inferred from homology"/>
<comment type="function">
    <text evidence="6">FAD-dependent monooxygenase; part of the satratoxin SC1 cluster involved in the biosynthesis of satratoxins, trichothecene mycotoxins that are associated with human food poisonings (PubMed:25015739). Satratoxins are suggested to be made by products of multiple gene clusters (SC1, SC2 and SC3) that encode 21 proteins in all, including polyketide synthases, acetyltransferases, and other enzymes expected to modify the trichothecene skeleton (PubMed:25015739). SC1 encodes 10 proteins, SAT1 to SAT10 (PubMed:25015739). The largest are SAT8, which encodes a putative polyketide synthase (PKS) with a conventional non-reducing architecture, and SAT10, a putative protein containing four ankyrin repeats and thus may be involved in protein scaffolding (PubMed:25015739). The putative short-chain reductase SAT3 may assist the PKS in some capacity (PubMed:25015739). SAT6 contains a secretory lipase domain and acts probably as a trichothecene esterase (PubMed:25015739). SAT5 encodes a putative acetyltransferase, and so, with SAT6, may affect endogenous protection from toxicity (PubMed:25015739). The probable transcription factor SAT9 may regulate the expression of the SC1 cluster (PubMed:25015739). SC2 encodes proteins SAT11 to SAT16, the largest of which encodes the putative reducing PKS SAT13 (PubMed:25015739). SAT11 is a cytochrome P450 monooxygenase, while SAT14 and SAT16 are probable acetyltransferases (PubMed:25015739). The SC2 cluster may be regulated by the transcription factor SAT15 (PubMed:25015739). SC3 is a small cluster that encodes 5 proteins, SAT17 to SAT21 (PubMed:25015739). SAT21 is a putative MFS-type transporter which may have a role in exporting secondary metabolites (PubMed:25015739). The four other proteins putatively encoded in SC3 include the taurine hydroxylase-like protein SAT17, the O-methyltransferase SAT18, the acetyltransferase SAT19, and the Cys6-type zinc finger SAT20, the latter being probably involved in regulation of SC3 expression (PubMed:25015739).</text>
</comment>
<comment type="cofactor">
    <cofactor evidence="5">
        <name>FAD</name>
        <dbReference type="ChEBI" id="CHEBI:57692"/>
    </cofactor>
</comment>
<comment type="pathway">
    <text evidence="3">Mycotoxin biosynthesis.</text>
</comment>
<comment type="subcellular location">
    <subcellularLocation>
        <location evidence="2">Membrane</location>
        <topology evidence="2">Single-pass membrane protein</topology>
    </subcellularLocation>
</comment>
<comment type="miscellaneous">
    <text evidence="5">Trichothecenes are sesquiterpenoid toxins that act by inhibiting protein biosynthesis.</text>
</comment>
<comment type="similarity">
    <text evidence="5">Belongs to the paxM FAD-dependent monooxygenase family.</text>
</comment>
<reference key="1">
    <citation type="journal article" date="2014" name="BMC Genomics">
        <title>Comparative genome sequencing reveals chemotype-specific gene clusters in the toxigenic black mold Stachybotrys.</title>
        <authorList>
            <person name="Semeiks J."/>
            <person name="Borek D."/>
            <person name="Otwinowski Z."/>
            <person name="Grishin N.V."/>
        </authorList>
    </citation>
    <scope>NUCLEOTIDE SEQUENCE [LARGE SCALE GENOMIC DNA]</scope>
    <scope>IDENTIFICATION</scope>
    <scope>FUNCTION</scope>
    <source>
        <strain>CBS 109288 / IBT 7711</strain>
    </source>
</reference>
<accession>A0A084B9Z5</accession>
<gene>
    <name evidence="4" type="primary">SAT7</name>
    <name type="ORF">S7711_07281</name>
</gene>
<feature type="chain" id="PRO_0000442414" description="FAD-dependent monooxygenase SAT7">
    <location>
        <begin position="1"/>
        <end position="470"/>
    </location>
</feature>
<feature type="transmembrane region" description="Helical" evidence="2">
    <location>
        <begin position="28"/>
        <end position="48"/>
    </location>
</feature>
<feature type="active site" evidence="1">
    <location>
        <position position="227"/>
    </location>
</feature>
<feature type="active site" evidence="1">
    <location>
        <position position="260"/>
    </location>
</feature>
<feature type="binding site" evidence="1">
    <location>
        <position position="58"/>
    </location>
    <ligand>
        <name>FAD</name>
        <dbReference type="ChEBI" id="CHEBI:57692"/>
    </ligand>
</feature>
<feature type="binding site" evidence="1">
    <location>
        <position position="71"/>
    </location>
    <ligand>
        <name>FAD</name>
        <dbReference type="ChEBI" id="CHEBI:57692"/>
    </ligand>
</feature>
<feature type="binding site" evidence="1">
    <location>
        <position position="143"/>
    </location>
    <ligand>
        <name>FAD</name>
        <dbReference type="ChEBI" id="CHEBI:57692"/>
    </ligand>
</feature>
<feature type="binding site" evidence="1">
    <location>
        <position position="351"/>
    </location>
    <ligand>
        <name>FAD</name>
        <dbReference type="ChEBI" id="CHEBI:57692"/>
    </ligand>
</feature>
<feature type="binding site" evidence="1">
    <location>
        <position position="364"/>
    </location>
    <ligand>
        <name>FAD</name>
        <dbReference type="ChEBI" id="CHEBI:57692"/>
    </ligand>
</feature>
<protein>
    <recommendedName>
        <fullName evidence="4">FAD-dependent monooxygenase SAT7</fullName>
        <ecNumber evidence="6">1.-.-.-</ecNumber>
    </recommendedName>
    <alternativeName>
        <fullName evidence="4">Satratoxin biosynthesis SC1 cluster protein 7</fullName>
    </alternativeName>
</protein>
<evidence type="ECO:0000250" key="1">
    <source>
        <dbReference type="UniProtKB" id="B8M9J8"/>
    </source>
</evidence>
<evidence type="ECO:0000255" key="2"/>
<evidence type="ECO:0000269" key="3">
    <source>
    </source>
</evidence>
<evidence type="ECO:0000303" key="4">
    <source>
    </source>
</evidence>
<evidence type="ECO:0000305" key="5"/>
<evidence type="ECO:0000305" key="6">
    <source>
    </source>
</evidence>
<name>SAT7_STACB</name>
<dbReference type="EC" id="1.-.-.-" evidence="6"/>
<dbReference type="EMBL" id="KL647604">
    <property type="protein sequence ID" value="KEY74374.1"/>
    <property type="molecule type" value="Genomic_DNA"/>
</dbReference>
<dbReference type="SMR" id="A0A084B9Z5"/>
<dbReference type="HOGENOM" id="CLU_009665_6_3_1"/>
<dbReference type="OrthoDB" id="12184at5125"/>
<dbReference type="Proteomes" id="UP000028045">
    <property type="component" value="Unassembled WGS sequence"/>
</dbReference>
<dbReference type="GO" id="GO:0016020">
    <property type="term" value="C:membrane"/>
    <property type="evidence" value="ECO:0007669"/>
    <property type="project" value="UniProtKB-SubCell"/>
</dbReference>
<dbReference type="GO" id="GO:0071949">
    <property type="term" value="F:FAD binding"/>
    <property type="evidence" value="ECO:0007669"/>
    <property type="project" value="InterPro"/>
</dbReference>
<dbReference type="GO" id="GO:0004497">
    <property type="term" value="F:monooxygenase activity"/>
    <property type="evidence" value="ECO:0007669"/>
    <property type="project" value="UniProtKB-KW"/>
</dbReference>
<dbReference type="GO" id="GO:0044550">
    <property type="term" value="P:secondary metabolite biosynthetic process"/>
    <property type="evidence" value="ECO:0007669"/>
    <property type="project" value="TreeGrafter"/>
</dbReference>
<dbReference type="Gene3D" id="3.50.50.60">
    <property type="entry name" value="FAD/NAD(P)-binding domain"/>
    <property type="match status" value="1"/>
</dbReference>
<dbReference type="InterPro" id="IPR002938">
    <property type="entry name" value="FAD-bd"/>
</dbReference>
<dbReference type="InterPro" id="IPR036188">
    <property type="entry name" value="FAD/NAD-bd_sf"/>
</dbReference>
<dbReference type="InterPro" id="IPR051104">
    <property type="entry name" value="FAD_monoxygenase"/>
</dbReference>
<dbReference type="PANTHER" id="PTHR46720:SF3">
    <property type="entry name" value="FAD-BINDING DOMAIN-CONTAINING PROTEIN-RELATED"/>
    <property type="match status" value="1"/>
</dbReference>
<dbReference type="PANTHER" id="PTHR46720">
    <property type="entry name" value="HYDROXYLASE, PUTATIVE (AFU_ORTHOLOGUE AFUA_3G01460)-RELATED"/>
    <property type="match status" value="1"/>
</dbReference>
<dbReference type="Pfam" id="PF01494">
    <property type="entry name" value="FAD_binding_3"/>
    <property type="match status" value="1"/>
</dbReference>
<dbReference type="PRINTS" id="PR00420">
    <property type="entry name" value="RNGMNOXGNASE"/>
</dbReference>
<dbReference type="SUPFAM" id="SSF54373">
    <property type="entry name" value="FAD-linked reductases, C-terminal domain"/>
    <property type="match status" value="1"/>
</dbReference>
<dbReference type="SUPFAM" id="SSF51905">
    <property type="entry name" value="FAD/NAD(P)-binding domain"/>
    <property type="match status" value="1"/>
</dbReference>